<reference key="1">
    <citation type="journal article" date="2006" name="Proc. Natl. Acad. Sci. U.S.A.">
        <title>Molecular genetic anatomy of inter- and intraserotype variation in the human bacterial pathogen group A Streptococcus.</title>
        <authorList>
            <person name="Beres S.B."/>
            <person name="Richter E.W."/>
            <person name="Nagiec M.J."/>
            <person name="Sumby P."/>
            <person name="Porcella S.F."/>
            <person name="DeLeo F.R."/>
            <person name="Musser J.M."/>
        </authorList>
    </citation>
    <scope>NUCLEOTIDE SEQUENCE [LARGE SCALE GENOMIC DNA]</scope>
    <source>
        <strain>MGAS9429</strain>
    </source>
</reference>
<evidence type="ECO:0000255" key="1">
    <source>
        <dbReference type="HAMAP-Rule" id="MF_00593"/>
    </source>
</evidence>
<accession>Q1JLB7</accession>
<name>DLTA_STRPC</name>
<dbReference type="EC" id="6.2.1.54" evidence="1"/>
<dbReference type="EMBL" id="CP000259">
    <property type="protein sequence ID" value="ABF32302.1"/>
    <property type="molecule type" value="Genomic_DNA"/>
</dbReference>
<dbReference type="RefSeq" id="WP_002989572.1">
    <property type="nucleotide sequence ID" value="NC_008021.1"/>
</dbReference>
<dbReference type="SMR" id="Q1JLB7"/>
<dbReference type="KEGG" id="spk:MGAS9429_Spy1115"/>
<dbReference type="HOGENOM" id="CLU_000022_2_12_9"/>
<dbReference type="UniPathway" id="UPA00556"/>
<dbReference type="Proteomes" id="UP000002433">
    <property type="component" value="Chromosome"/>
</dbReference>
<dbReference type="GO" id="GO:0005737">
    <property type="term" value="C:cytoplasm"/>
    <property type="evidence" value="ECO:0007669"/>
    <property type="project" value="UniProtKB-SubCell"/>
</dbReference>
<dbReference type="GO" id="GO:0005524">
    <property type="term" value="F:ATP binding"/>
    <property type="evidence" value="ECO:0007669"/>
    <property type="project" value="UniProtKB-KW"/>
</dbReference>
<dbReference type="GO" id="GO:0047473">
    <property type="term" value="F:D-alanine [D-alanyl carrier protein] ligase activity"/>
    <property type="evidence" value="ECO:0007669"/>
    <property type="project" value="UniProtKB-UniRule"/>
</dbReference>
<dbReference type="GO" id="GO:0070395">
    <property type="term" value="P:lipoteichoic acid biosynthetic process"/>
    <property type="evidence" value="ECO:0007669"/>
    <property type="project" value="UniProtKB-UniRule"/>
</dbReference>
<dbReference type="CDD" id="cd05945">
    <property type="entry name" value="DltA"/>
    <property type="match status" value="1"/>
</dbReference>
<dbReference type="FunFam" id="3.30.300.30:FF:000012">
    <property type="entry name" value="D-alanine--D-alanyl carrier protein ligase"/>
    <property type="match status" value="1"/>
</dbReference>
<dbReference type="Gene3D" id="3.30.300.30">
    <property type="match status" value="1"/>
</dbReference>
<dbReference type="Gene3D" id="3.40.50.12780">
    <property type="entry name" value="N-terminal domain of ligase-like"/>
    <property type="match status" value="1"/>
</dbReference>
<dbReference type="HAMAP" id="MF_00593">
    <property type="entry name" value="DltA"/>
    <property type="match status" value="1"/>
</dbReference>
<dbReference type="InterPro" id="IPR010071">
    <property type="entry name" value="AA_adenyl_dom"/>
</dbReference>
<dbReference type="InterPro" id="IPR025110">
    <property type="entry name" value="AMP-bd_C"/>
</dbReference>
<dbReference type="InterPro" id="IPR045851">
    <property type="entry name" value="AMP-bd_C_sf"/>
</dbReference>
<dbReference type="InterPro" id="IPR020845">
    <property type="entry name" value="AMP-binding_CS"/>
</dbReference>
<dbReference type="InterPro" id="IPR000873">
    <property type="entry name" value="AMP-dep_synth/lig_dom"/>
</dbReference>
<dbReference type="InterPro" id="IPR042099">
    <property type="entry name" value="ANL_N_sf"/>
</dbReference>
<dbReference type="InterPro" id="IPR010072">
    <property type="entry name" value="DltA"/>
</dbReference>
<dbReference type="InterPro" id="IPR044507">
    <property type="entry name" value="DltA-like"/>
</dbReference>
<dbReference type="NCBIfam" id="TIGR01733">
    <property type="entry name" value="AA-adenyl-dom"/>
    <property type="match status" value="1"/>
</dbReference>
<dbReference type="NCBIfam" id="TIGR01734">
    <property type="entry name" value="D-ala-DACP-lig"/>
    <property type="match status" value="1"/>
</dbReference>
<dbReference type="NCBIfam" id="NF003417">
    <property type="entry name" value="PRK04813.1"/>
    <property type="match status" value="1"/>
</dbReference>
<dbReference type="PANTHER" id="PTHR45398">
    <property type="match status" value="1"/>
</dbReference>
<dbReference type="PANTHER" id="PTHR45398:SF1">
    <property type="entry name" value="ENZYME, PUTATIVE (JCVI)-RELATED"/>
    <property type="match status" value="1"/>
</dbReference>
<dbReference type="Pfam" id="PF00501">
    <property type="entry name" value="AMP-binding"/>
    <property type="match status" value="1"/>
</dbReference>
<dbReference type="Pfam" id="PF13193">
    <property type="entry name" value="AMP-binding_C"/>
    <property type="match status" value="1"/>
</dbReference>
<dbReference type="SUPFAM" id="SSF56801">
    <property type="entry name" value="Acetyl-CoA synthetase-like"/>
    <property type="match status" value="1"/>
</dbReference>
<dbReference type="PROSITE" id="PS00455">
    <property type="entry name" value="AMP_BINDING"/>
    <property type="match status" value="1"/>
</dbReference>
<keyword id="KW-0067">ATP-binding</keyword>
<keyword id="KW-0963">Cytoplasm</keyword>
<keyword id="KW-0436">Ligase</keyword>
<keyword id="KW-0547">Nucleotide-binding</keyword>
<sequence>MIKDMIDSIEQFAQTQADFPVYDCLGERRTYGQLKRDSDSIAAFIDSLALLAKSPVLVFGAQTYDMLATFVALTKSGHAYIPVDVHSAPERILAIIEIAKPSLIIAIEEFPLTIEGISLVSLSEIESAKLAEMPYERTHSVKGDDNYYIIFTSGTTGQPKGVQISHDNLLSFTNWMIEDAAFDVPKQPQMLAQPPYSFDLSVMYWAPTLALGGTLFALPKELVADFKQLFTTIAQLPVGIWTSTPSFADMAMLSDDFCQAKMPALTHFYFDGEELTVSTARKLFERFPSAKIINAYGPTEATVALSAIEITREMVDNYTRLPIGYPKPDSPTYIIDEDGKELSSGEQGEIIVTGPAVSKGYLNNPEKTAEAFFTFKGQPAYHTGDIGSLTEDNILLYGGRLDFQIKYAGYRIELEDVSQQLNQSPMVASAVAVPRYNKEHKVQNLLAYIVVKDGVKERFDRELELTKAIKASVKDHMMSYMMPSKFLYRDSLPLTPNGKIDIKTLINEVNNR</sequence>
<feature type="chain" id="PRO_1000025537" description="D-alanine--D-alanyl carrier protein ligase">
    <location>
        <begin position="1"/>
        <end position="512"/>
    </location>
</feature>
<feature type="binding site" evidence="1">
    <location>
        <begin position="152"/>
        <end position="153"/>
    </location>
    <ligand>
        <name>ATP</name>
        <dbReference type="ChEBI" id="CHEBI:30616"/>
    </ligand>
</feature>
<feature type="binding site" evidence="1">
    <location>
        <position position="199"/>
    </location>
    <ligand>
        <name>D-alanine</name>
        <dbReference type="ChEBI" id="CHEBI:57416"/>
    </ligand>
</feature>
<feature type="binding site" evidence="1">
    <location>
        <begin position="294"/>
        <end position="299"/>
    </location>
    <ligand>
        <name>ATP</name>
        <dbReference type="ChEBI" id="CHEBI:30616"/>
    </ligand>
</feature>
<feature type="binding site" evidence="1">
    <location>
        <position position="303"/>
    </location>
    <ligand>
        <name>D-alanine</name>
        <dbReference type="ChEBI" id="CHEBI:57416"/>
    </ligand>
</feature>
<feature type="binding site" evidence="1">
    <location>
        <position position="385"/>
    </location>
    <ligand>
        <name>ATP</name>
        <dbReference type="ChEBI" id="CHEBI:30616"/>
    </ligand>
</feature>
<feature type="binding site" evidence="1">
    <location>
        <begin position="397"/>
        <end position="400"/>
    </location>
    <ligand>
        <name>ATP</name>
        <dbReference type="ChEBI" id="CHEBI:30616"/>
    </ligand>
</feature>
<feature type="binding site" evidence="1">
    <location>
        <position position="499"/>
    </location>
    <ligand>
        <name>ATP</name>
        <dbReference type="ChEBI" id="CHEBI:30616"/>
    </ligand>
</feature>
<feature type="binding site" evidence="1">
    <location>
        <position position="499"/>
    </location>
    <ligand>
        <name>D-alanine</name>
        <dbReference type="ChEBI" id="CHEBI:57416"/>
    </ligand>
</feature>
<gene>
    <name evidence="1" type="primary">dltA</name>
    <name type="ordered locus">MGAS9429_Spy1115</name>
</gene>
<organism>
    <name type="scientific">Streptococcus pyogenes serotype M12 (strain MGAS9429)</name>
    <dbReference type="NCBI Taxonomy" id="370551"/>
    <lineage>
        <taxon>Bacteria</taxon>
        <taxon>Bacillati</taxon>
        <taxon>Bacillota</taxon>
        <taxon>Bacilli</taxon>
        <taxon>Lactobacillales</taxon>
        <taxon>Streptococcaceae</taxon>
        <taxon>Streptococcus</taxon>
    </lineage>
</organism>
<protein>
    <recommendedName>
        <fullName evidence="1">D-alanine--D-alanyl carrier protein ligase</fullName>
        <shortName evidence="1">DCL</shortName>
        <ecNumber evidence="1">6.2.1.54</ecNumber>
    </recommendedName>
    <alternativeName>
        <fullName evidence="1">D-alanine--poly(phosphoribitol) ligase subunit 1</fullName>
    </alternativeName>
    <alternativeName>
        <fullName evidence="1">D-alanine-activating enzyme</fullName>
        <shortName evidence="1">DAE</shortName>
    </alternativeName>
</protein>
<comment type="function">
    <text evidence="1">Catalyzes the first step in the D-alanylation of lipoteichoic acid (LTA), the activation of D-alanine and its transfer onto the D-alanyl carrier protein (Dcp) DltC. In an ATP-dependent two-step reaction, forms a high energy D-alanyl-AMP intermediate, followed by transfer of the D-alanyl residue as a thiol ester to the phosphopantheinyl prosthetic group of the Dcp. D-alanylation of LTA plays an important role in modulating the properties of the cell wall in Gram-positive bacteria, influencing the net charge of the cell wall.</text>
</comment>
<comment type="catalytic activity">
    <reaction evidence="1">
        <text>holo-[D-alanyl-carrier protein] + D-alanine + ATP = D-alanyl-[D-alanyl-carrier protein] + AMP + diphosphate</text>
        <dbReference type="Rhea" id="RHEA:55132"/>
        <dbReference type="Rhea" id="RHEA-COMP:14102"/>
        <dbReference type="Rhea" id="RHEA-COMP:14103"/>
        <dbReference type="ChEBI" id="CHEBI:30616"/>
        <dbReference type="ChEBI" id="CHEBI:33019"/>
        <dbReference type="ChEBI" id="CHEBI:57416"/>
        <dbReference type="ChEBI" id="CHEBI:64479"/>
        <dbReference type="ChEBI" id="CHEBI:138620"/>
        <dbReference type="ChEBI" id="CHEBI:456215"/>
        <dbReference type="EC" id="6.2.1.54"/>
    </reaction>
</comment>
<comment type="pathway">
    <text evidence="1">Cell wall biogenesis; lipoteichoic acid biosynthesis.</text>
</comment>
<comment type="subcellular location">
    <subcellularLocation>
        <location evidence="1">Cytoplasm</location>
    </subcellularLocation>
</comment>
<comment type="similarity">
    <text evidence="1">Belongs to the ATP-dependent AMP-binding enzyme family. DltA subfamily.</text>
</comment>
<proteinExistence type="inferred from homology"/>